<comment type="subcellular location">
    <subcellularLocation>
        <location evidence="1">Membrane</location>
        <topology evidence="1">Multi-pass membrane protein</topology>
    </subcellularLocation>
</comment>
<comment type="tissue specificity">
    <text evidence="3">Not detected.</text>
</comment>
<comment type="similarity">
    <text evidence="4">Belongs to the major facilitator superfamily. Proton-dependent oligopeptide transporter (POT/PTR) (TC 2.A.17) family.</text>
</comment>
<comment type="caution">
    <text evidence="4">Could be the product of a pseudogene.</text>
</comment>
<name>PTR20_ARATH</name>
<reference key="1">
    <citation type="journal article" date="2000" name="Nature">
        <title>Sequence and analysis of chromosome 1 of the plant Arabidopsis thaliana.</title>
        <authorList>
            <person name="Theologis A."/>
            <person name="Ecker J.R."/>
            <person name="Palm C.J."/>
            <person name="Federspiel N.A."/>
            <person name="Kaul S."/>
            <person name="White O."/>
            <person name="Alonso J."/>
            <person name="Altafi H."/>
            <person name="Araujo R."/>
            <person name="Bowman C.L."/>
            <person name="Brooks S.Y."/>
            <person name="Buehler E."/>
            <person name="Chan A."/>
            <person name="Chao Q."/>
            <person name="Chen H."/>
            <person name="Cheuk R.F."/>
            <person name="Chin C.W."/>
            <person name="Chung M.K."/>
            <person name="Conn L."/>
            <person name="Conway A.B."/>
            <person name="Conway A.R."/>
            <person name="Creasy T.H."/>
            <person name="Dewar K."/>
            <person name="Dunn P."/>
            <person name="Etgu P."/>
            <person name="Feldblyum T.V."/>
            <person name="Feng J.-D."/>
            <person name="Fong B."/>
            <person name="Fujii C.Y."/>
            <person name="Gill J.E."/>
            <person name="Goldsmith A.D."/>
            <person name="Haas B."/>
            <person name="Hansen N.F."/>
            <person name="Hughes B."/>
            <person name="Huizar L."/>
            <person name="Hunter J.L."/>
            <person name="Jenkins J."/>
            <person name="Johnson-Hopson C."/>
            <person name="Khan S."/>
            <person name="Khaykin E."/>
            <person name="Kim C.J."/>
            <person name="Koo H.L."/>
            <person name="Kremenetskaia I."/>
            <person name="Kurtz D.B."/>
            <person name="Kwan A."/>
            <person name="Lam B."/>
            <person name="Langin-Hooper S."/>
            <person name="Lee A."/>
            <person name="Lee J.M."/>
            <person name="Lenz C.A."/>
            <person name="Li J.H."/>
            <person name="Li Y.-P."/>
            <person name="Lin X."/>
            <person name="Liu S.X."/>
            <person name="Liu Z.A."/>
            <person name="Luros J.S."/>
            <person name="Maiti R."/>
            <person name="Marziali A."/>
            <person name="Militscher J."/>
            <person name="Miranda M."/>
            <person name="Nguyen M."/>
            <person name="Nierman W.C."/>
            <person name="Osborne B.I."/>
            <person name="Pai G."/>
            <person name="Peterson J."/>
            <person name="Pham P.K."/>
            <person name="Rizzo M."/>
            <person name="Rooney T."/>
            <person name="Rowley D."/>
            <person name="Sakano H."/>
            <person name="Salzberg S.L."/>
            <person name="Schwartz J.R."/>
            <person name="Shinn P."/>
            <person name="Southwick A.M."/>
            <person name="Sun H."/>
            <person name="Tallon L.J."/>
            <person name="Tambunga G."/>
            <person name="Toriumi M.J."/>
            <person name="Town C.D."/>
            <person name="Utterback T."/>
            <person name="Van Aken S."/>
            <person name="Vaysberg M."/>
            <person name="Vysotskaia V.S."/>
            <person name="Walker M."/>
            <person name="Wu D."/>
            <person name="Yu G."/>
            <person name="Fraser C.M."/>
            <person name="Venter J.C."/>
            <person name="Davis R.W."/>
        </authorList>
    </citation>
    <scope>NUCLEOTIDE SEQUENCE [LARGE SCALE GENOMIC DNA]</scope>
    <source>
        <strain>cv. Columbia</strain>
    </source>
</reference>
<reference key="2">
    <citation type="journal article" date="2017" name="Plant J.">
        <title>Araport11: a complete reannotation of the Arabidopsis thaliana reference genome.</title>
        <authorList>
            <person name="Cheng C.Y."/>
            <person name="Krishnakumar V."/>
            <person name="Chan A.P."/>
            <person name="Thibaud-Nissen F."/>
            <person name="Schobel S."/>
            <person name="Town C.D."/>
        </authorList>
    </citation>
    <scope>GENOME REANNOTATION</scope>
    <source>
        <strain>cv. Columbia</strain>
    </source>
</reference>
<reference key="3">
    <citation type="journal article" date="2007" name="FEBS Lett.">
        <title>Nitrate transporters and peptide transporters.</title>
        <authorList>
            <person name="Tsay Y.F."/>
            <person name="Chiu C.C."/>
            <person name="Tsai C.B."/>
            <person name="Ho C.H."/>
            <person name="Hsu P.K."/>
        </authorList>
    </citation>
    <scope>TISSUE SPECIFICITY</scope>
    <scope>GENE FAMILY</scope>
</reference>
<reference key="4">
    <citation type="journal article" date="2010" name="Plant Cell">
        <title>The Arabidopsis nitrate transporter NRT1.8 functions in nitrate removal from the xylem sap and mediates cadmium tolerance.</title>
        <authorList>
            <person name="Li J.Y."/>
            <person name="Fu Y.L."/>
            <person name="Pike S.M."/>
            <person name="Bao J."/>
            <person name="Tian W."/>
            <person name="Zhang Y."/>
            <person name="Chen C.Z."/>
            <person name="Zhang Y."/>
            <person name="Li H.M."/>
            <person name="Huang J."/>
            <person name="Li L.G."/>
            <person name="Schroeder J.I."/>
            <person name="Gassmann W."/>
            <person name="Gong J.M."/>
        </authorList>
    </citation>
    <scope>GENE FAMILY</scope>
</reference>
<reference key="5">
    <citation type="journal article" date="2014" name="Trends Plant Sci.">
        <title>A unified nomenclature of NITRATE TRANSPORTER 1/PEPTIDE TRANSPORTER family members in plants.</title>
        <authorList>
            <person name="Leran S."/>
            <person name="Varala K."/>
            <person name="Boyer J.C."/>
            <person name="Chiurazzi M."/>
            <person name="Crawford N."/>
            <person name="Daniel-Vedele F."/>
            <person name="David L."/>
            <person name="Dickstein R."/>
            <person name="Fernandez E."/>
            <person name="Forde B."/>
            <person name="Gassmann W."/>
            <person name="Geiger D."/>
            <person name="Gojon A."/>
            <person name="Gong J.M."/>
            <person name="Halkier B.A."/>
            <person name="Harris J.M."/>
            <person name="Hedrich R."/>
            <person name="Limami A.M."/>
            <person name="Rentsch D."/>
            <person name="Seo M."/>
            <person name="Tsay Y.F."/>
            <person name="Zhang M."/>
            <person name="Coruzzi G."/>
            <person name="Lacombe B."/>
        </authorList>
    </citation>
    <scope>GENE FAMILY</scope>
    <scope>NOMENCLATURE</scope>
</reference>
<accession>Q9CAR9</accession>
<protein>
    <recommendedName>
        <fullName>Putative protein NRT1/ PTR FAMILY 2.14</fullName>
        <shortName>AtNPF2.14</shortName>
    </recommendedName>
</protein>
<gene>
    <name type="primary">NPF2.14</name>
    <name type="ordered locus">At1g69860</name>
    <name type="ORF">T17F3.11</name>
</gene>
<keyword id="KW-0472">Membrane</keyword>
<keyword id="KW-1185">Reference proteome</keyword>
<keyword id="KW-0812">Transmembrane</keyword>
<keyword id="KW-1133">Transmembrane helix</keyword>
<keyword id="KW-0813">Transport</keyword>
<evidence type="ECO:0000250" key="1"/>
<evidence type="ECO:0000255" key="2"/>
<evidence type="ECO:0000269" key="3">
    <source>
    </source>
</evidence>
<evidence type="ECO:0000305" key="4"/>
<sequence length="555" mass="62580">MDNEKGTSSSDLTTRQRKPLGWKAMPYIIGNETLERLATFGLMANFMVYMVREYHMDQVQAVTLINTWSALTNFAPIIGAFISDSYTGKFNTIVFGSIAELLGMLVLTFTSLVPNLRPPPCTADQITGQCIPYSYSQLYVLLSGLFLLSVGTGGIRSCSVPFSLDQFDDSTEEGREGSRSFFSWYYTTHTIVQLVSMTLVLYVQNNISWGIGFAIPTVLNFFALLLLFVGTRYYVFVKPEGSVFSGVFKVLVAAYKKRKARFTSGIDYHQPLLETDLQSNKLVLTDQFRFLNKAVIVMNNDEAGNEEWRTCTVRQIEDIKSIISIIPIFASSIIGFLAMNQQQTFTVSQALKMDLQFPGTSYLIPPASITVISLLNIGIWLPFYETVLVRHIENITKQNGGISLLQKVGIGNIFSISTMLISGIVERKRRDLSLNGVKMSVFWLTPQQVLMGFYQVFTIVGLTEFFNKQVPINMRSIGNSLLYLGLSLASYLSSAMVSIVHSVTARGGQSWLTDDIDKSKLDCFYYFIAALSTLNFIFFFWCARRYRYRNYSNEQ</sequence>
<feature type="chain" id="PRO_0000399954" description="Putative protein NRT1/ PTR FAMILY 2.14">
    <location>
        <begin position="1"/>
        <end position="555"/>
    </location>
</feature>
<feature type="transmembrane region" description="Helical" evidence="2">
    <location>
        <begin position="62"/>
        <end position="82"/>
    </location>
</feature>
<feature type="transmembrane region" description="Helical" evidence="2">
    <location>
        <begin position="93"/>
        <end position="113"/>
    </location>
</feature>
<feature type="transmembrane region" description="Helical" evidence="2">
    <location>
        <begin position="135"/>
        <end position="155"/>
    </location>
</feature>
<feature type="transmembrane region" description="Helical" evidence="2">
    <location>
        <begin position="181"/>
        <end position="201"/>
    </location>
</feature>
<feature type="transmembrane region" description="Helical" evidence="2">
    <location>
        <begin position="209"/>
        <end position="229"/>
    </location>
</feature>
<feature type="transmembrane region" description="Helical" evidence="2">
    <location>
        <begin position="234"/>
        <end position="254"/>
    </location>
</feature>
<feature type="transmembrane region" description="Helical" evidence="2">
    <location>
        <begin position="319"/>
        <end position="339"/>
    </location>
</feature>
<feature type="transmembrane region" description="Helical" evidence="2">
    <location>
        <begin position="363"/>
        <end position="383"/>
    </location>
</feature>
<feature type="transmembrane region" description="Helical" evidence="2">
    <location>
        <begin position="405"/>
        <end position="425"/>
    </location>
</feature>
<feature type="transmembrane region" description="Helical" evidence="2">
    <location>
        <begin position="441"/>
        <end position="461"/>
    </location>
</feature>
<feature type="transmembrane region" description="Helical" evidence="2">
    <location>
        <begin position="480"/>
        <end position="500"/>
    </location>
</feature>
<feature type="transmembrane region" description="Helical" evidence="2">
    <location>
        <begin position="523"/>
        <end position="543"/>
    </location>
</feature>
<proteinExistence type="uncertain"/>
<organism>
    <name type="scientific">Arabidopsis thaliana</name>
    <name type="common">Mouse-ear cress</name>
    <dbReference type="NCBI Taxonomy" id="3702"/>
    <lineage>
        <taxon>Eukaryota</taxon>
        <taxon>Viridiplantae</taxon>
        <taxon>Streptophyta</taxon>
        <taxon>Embryophyta</taxon>
        <taxon>Tracheophyta</taxon>
        <taxon>Spermatophyta</taxon>
        <taxon>Magnoliopsida</taxon>
        <taxon>eudicotyledons</taxon>
        <taxon>Gunneridae</taxon>
        <taxon>Pentapetalae</taxon>
        <taxon>rosids</taxon>
        <taxon>malvids</taxon>
        <taxon>Brassicales</taxon>
        <taxon>Brassicaceae</taxon>
        <taxon>Camelineae</taxon>
        <taxon>Arabidopsis</taxon>
    </lineage>
</organism>
<dbReference type="EMBL" id="AC010675">
    <property type="protein sequence ID" value="AAG52569.1"/>
    <property type="molecule type" value="Genomic_DNA"/>
</dbReference>
<dbReference type="EMBL" id="CP002684">
    <property type="protein sequence ID" value="AEE34992.1"/>
    <property type="molecule type" value="Genomic_DNA"/>
</dbReference>
<dbReference type="PIR" id="H96720">
    <property type="entry name" value="H96720"/>
</dbReference>
<dbReference type="RefSeq" id="NP_177144.1">
    <property type="nucleotide sequence ID" value="NM_105654.1"/>
</dbReference>
<dbReference type="SMR" id="Q9CAR9"/>
<dbReference type="STRING" id="3702.Q9CAR9"/>
<dbReference type="PaxDb" id="3702-AT1G69860.1"/>
<dbReference type="EnsemblPlants" id="AT1G69860.1">
    <property type="protein sequence ID" value="AT1G69860.1"/>
    <property type="gene ID" value="AT1G69860"/>
</dbReference>
<dbReference type="GeneID" id="843322"/>
<dbReference type="Gramene" id="AT1G69860.1">
    <property type="protein sequence ID" value="AT1G69860.1"/>
    <property type="gene ID" value="AT1G69860"/>
</dbReference>
<dbReference type="KEGG" id="ath:AT1G69860"/>
<dbReference type="Araport" id="AT1G69860"/>
<dbReference type="TAIR" id="AT1G69860"/>
<dbReference type="eggNOG" id="KOG1237">
    <property type="taxonomic scope" value="Eukaryota"/>
</dbReference>
<dbReference type="HOGENOM" id="CLU_009313_4_2_1"/>
<dbReference type="InParanoid" id="Q9CAR9"/>
<dbReference type="OMA" id="CAQRYRY"/>
<dbReference type="PhylomeDB" id="Q9CAR9"/>
<dbReference type="Proteomes" id="UP000006548">
    <property type="component" value="Chromosome 1"/>
</dbReference>
<dbReference type="ExpressionAtlas" id="Q9CAR9">
    <property type="expression patterns" value="baseline and differential"/>
</dbReference>
<dbReference type="GO" id="GO:0016020">
    <property type="term" value="C:membrane"/>
    <property type="evidence" value="ECO:0007669"/>
    <property type="project" value="UniProtKB-SubCell"/>
</dbReference>
<dbReference type="GO" id="GO:0022857">
    <property type="term" value="F:transmembrane transporter activity"/>
    <property type="evidence" value="ECO:0007669"/>
    <property type="project" value="InterPro"/>
</dbReference>
<dbReference type="CDD" id="cd17416">
    <property type="entry name" value="MFS_NPF1_2"/>
    <property type="match status" value="1"/>
</dbReference>
<dbReference type="Gene3D" id="1.20.1250.20">
    <property type="entry name" value="MFS general substrate transporter like domains"/>
    <property type="match status" value="1"/>
</dbReference>
<dbReference type="InterPro" id="IPR036259">
    <property type="entry name" value="MFS_trans_sf"/>
</dbReference>
<dbReference type="InterPro" id="IPR000109">
    <property type="entry name" value="POT_fam"/>
</dbReference>
<dbReference type="PANTHER" id="PTHR11654">
    <property type="entry name" value="OLIGOPEPTIDE TRANSPORTER-RELATED"/>
    <property type="match status" value="1"/>
</dbReference>
<dbReference type="Pfam" id="PF00854">
    <property type="entry name" value="PTR2"/>
    <property type="match status" value="1"/>
</dbReference>
<dbReference type="SUPFAM" id="SSF103473">
    <property type="entry name" value="MFS general substrate transporter"/>
    <property type="match status" value="1"/>
</dbReference>